<proteinExistence type="inferred from homology"/>
<reference key="1">
    <citation type="journal article" date="2008" name="PLoS ONE">
        <title>Survival in nuclear waste, extreme resistance, and potential applications gleaned from the genome sequence of Kineococcus radiotolerans SRS30216.</title>
        <authorList>
            <person name="Bagwell C.E."/>
            <person name="Bhat S."/>
            <person name="Hawkins G.M."/>
            <person name="Smith B.W."/>
            <person name="Biswas T."/>
            <person name="Hoover T.R."/>
            <person name="Saunders E."/>
            <person name="Han C.S."/>
            <person name="Tsodikov O.V."/>
            <person name="Shimkets L.J."/>
        </authorList>
    </citation>
    <scope>NUCLEOTIDE SEQUENCE [LARGE SCALE GENOMIC DNA]</scope>
    <source>
        <strain>ATCC BAA-149 / DSM 14245 / SRS30216</strain>
    </source>
</reference>
<accession>A6W6U1</accession>
<keyword id="KW-0030">Aminoacyl-tRNA synthetase</keyword>
<keyword id="KW-0067">ATP-binding</keyword>
<keyword id="KW-0963">Cytoplasm</keyword>
<keyword id="KW-0436">Ligase</keyword>
<keyword id="KW-0479">Metal-binding</keyword>
<keyword id="KW-0547">Nucleotide-binding</keyword>
<keyword id="KW-0648">Protein biosynthesis</keyword>
<keyword id="KW-1185">Reference proteome</keyword>
<keyword id="KW-0862">Zinc</keyword>
<sequence>MTHVLSAVAWPYANGPRHIGHVAGFGVPSDVFSRYMRMAGHDVLMVSGTDEHGTPILVQAEQEGLTPQQLADRYNRVIAEDLHGLGLSYDLFTRTTTANHYAVVQEMFRTVHRNGYMVARKGMGAISPSTGRTLPDRYVEGTCPICGYDGARGDQCDNCGNQLDAIELKNPRSRINGETPVFVETEHFYLDLPALAEALGSWLQTRADTGRWRPNVLKFSQNLLADMKPRAMTRDIDWGIPVPLEGWEDNPAKRLYVWFDAVIGYLSASVEWARRSGDDDAWKAWWTDPAAESYYFMGKDNITFHSQIWPAELLAYDGRGSAGGQPGPFGNLNLPTEVVASEFLTMEGKQFSSSRGVVIYVRDVLARYQPDALRYFISAAGPENNDSDFTWQEFATRTNSELVAGWGNLVNRTASLIAKNVGEIPAAGELTDADRDLLATTSGGFSTVGGFIEAHRQRAGIGEAMRVVGEVNKYLTEQEPWKIKNSDPERMKSVLHVTAQAVSDCRTLLSPFLPHSAQKVHQAFGGVGTVSPLPELREVTDLDDGRPYPVLTGDYRRGETLPEWASHPVVPGTPVAAPTPVFTKLDVAAVVEEELGRLQR</sequence>
<organism>
    <name type="scientific">Kineococcus radiotolerans (strain ATCC BAA-149 / DSM 14245 / SRS30216)</name>
    <dbReference type="NCBI Taxonomy" id="266940"/>
    <lineage>
        <taxon>Bacteria</taxon>
        <taxon>Bacillati</taxon>
        <taxon>Actinomycetota</taxon>
        <taxon>Actinomycetes</taxon>
        <taxon>Kineosporiales</taxon>
        <taxon>Kineosporiaceae</taxon>
        <taxon>Kineococcus</taxon>
    </lineage>
</organism>
<evidence type="ECO:0000255" key="1">
    <source>
        <dbReference type="HAMAP-Rule" id="MF_00098"/>
    </source>
</evidence>
<name>SYM_KINRD</name>
<dbReference type="EC" id="6.1.1.10" evidence="1"/>
<dbReference type="EMBL" id="CP000750">
    <property type="protein sequence ID" value="ABS02530.1"/>
    <property type="molecule type" value="Genomic_DNA"/>
</dbReference>
<dbReference type="RefSeq" id="WP_012084618.1">
    <property type="nucleotide sequence ID" value="NC_009664.2"/>
</dbReference>
<dbReference type="SMR" id="A6W6U1"/>
<dbReference type="STRING" id="266940.Krad_1042"/>
<dbReference type="KEGG" id="kra:Krad_1042"/>
<dbReference type="eggNOG" id="COG0143">
    <property type="taxonomic scope" value="Bacteria"/>
</dbReference>
<dbReference type="HOGENOM" id="CLU_009710_1_2_11"/>
<dbReference type="OrthoDB" id="9810191at2"/>
<dbReference type="Proteomes" id="UP000001116">
    <property type="component" value="Chromosome"/>
</dbReference>
<dbReference type="GO" id="GO:0005829">
    <property type="term" value="C:cytosol"/>
    <property type="evidence" value="ECO:0007669"/>
    <property type="project" value="TreeGrafter"/>
</dbReference>
<dbReference type="GO" id="GO:0005524">
    <property type="term" value="F:ATP binding"/>
    <property type="evidence" value="ECO:0007669"/>
    <property type="project" value="UniProtKB-UniRule"/>
</dbReference>
<dbReference type="GO" id="GO:0046872">
    <property type="term" value="F:metal ion binding"/>
    <property type="evidence" value="ECO:0007669"/>
    <property type="project" value="UniProtKB-KW"/>
</dbReference>
<dbReference type="GO" id="GO:0004825">
    <property type="term" value="F:methionine-tRNA ligase activity"/>
    <property type="evidence" value="ECO:0007669"/>
    <property type="project" value="UniProtKB-UniRule"/>
</dbReference>
<dbReference type="GO" id="GO:0006431">
    <property type="term" value="P:methionyl-tRNA aminoacylation"/>
    <property type="evidence" value="ECO:0007669"/>
    <property type="project" value="UniProtKB-UniRule"/>
</dbReference>
<dbReference type="CDD" id="cd07957">
    <property type="entry name" value="Anticodon_Ia_Met"/>
    <property type="match status" value="1"/>
</dbReference>
<dbReference type="CDD" id="cd00814">
    <property type="entry name" value="MetRS_core"/>
    <property type="match status" value="1"/>
</dbReference>
<dbReference type="FunFam" id="2.20.28.20:FF:000001">
    <property type="entry name" value="Methionine--tRNA ligase"/>
    <property type="match status" value="1"/>
</dbReference>
<dbReference type="Gene3D" id="3.40.50.620">
    <property type="entry name" value="HUPs"/>
    <property type="match status" value="1"/>
</dbReference>
<dbReference type="Gene3D" id="1.10.730.10">
    <property type="entry name" value="Isoleucyl-tRNA Synthetase, Domain 1"/>
    <property type="match status" value="1"/>
</dbReference>
<dbReference type="Gene3D" id="2.20.28.20">
    <property type="entry name" value="Methionyl-tRNA synthetase, Zn-domain"/>
    <property type="match status" value="1"/>
</dbReference>
<dbReference type="HAMAP" id="MF_00098">
    <property type="entry name" value="Met_tRNA_synth_type1"/>
    <property type="match status" value="1"/>
</dbReference>
<dbReference type="InterPro" id="IPR041872">
    <property type="entry name" value="Anticodon_Met"/>
</dbReference>
<dbReference type="InterPro" id="IPR023458">
    <property type="entry name" value="Met-tRNA_ligase_1"/>
</dbReference>
<dbReference type="InterPro" id="IPR014758">
    <property type="entry name" value="Met-tRNA_synth"/>
</dbReference>
<dbReference type="InterPro" id="IPR015413">
    <property type="entry name" value="Methionyl/Leucyl_tRNA_Synth"/>
</dbReference>
<dbReference type="InterPro" id="IPR033911">
    <property type="entry name" value="MetRS_core"/>
</dbReference>
<dbReference type="InterPro" id="IPR029038">
    <property type="entry name" value="MetRS_Zn"/>
</dbReference>
<dbReference type="InterPro" id="IPR014729">
    <property type="entry name" value="Rossmann-like_a/b/a_fold"/>
</dbReference>
<dbReference type="InterPro" id="IPR009080">
    <property type="entry name" value="tRNAsynth_Ia_anticodon-bd"/>
</dbReference>
<dbReference type="NCBIfam" id="TIGR00398">
    <property type="entry name" value="metG"/>
    <property type="match status" value="1"/>
</dbReference>
<dbReference type="PANTHER" id="PTHR45765">
    <property type="entry name" value="METHIONINE--TRNA LIGASE"/>
    <property type="match status" value="1"/>
</dbReference>
<dbReference type="PANTHER" id="PTHR45765:SF1">
    <property type="entry name" value="METHIONINE--TRNA LIGASE, CYTOPLASMIC"/>
    <property type="match status" value="1"/>
</dbReference>
<dbReference type="Pfam" id="PF19303">
    <property type="entry name" value="Anticodon_3"/>
    <property type="match status" value="1"/>
</dbReference>
<dbReference type="Pfam" id="PF09334">
    <property type="entry name" value="tRNA-synt_1g"/>
    <property type="match status" value="1"/>
</dbReference>
<dbReference type="PRINTS" id="PR01041">
    <property type="entry name" value="TRNASYNTHMET"/>
</dbReference>
<dbReference type="SUPFAM" id="SSF47323">
    <property type="entry name" value="Anticodon-binding domain of a subclass of class I aminoacyl-tRNA synthetases"/>
    <property type="match status" value="1"/>
</dbReference>
<dbReference type="SUPFAM" id="SSF57770">
    <property type="entry name" value="Methionyl-tRNA synthetase (MetRS), Zn-domain"/>
    <property type="match status" value="1"/>
</dbReference>
<dbReference type="SUPFAM" id="SSF52374">
    <property type="entry name" value="Nucleotidylyl transferase"/>
    <property type="match status" value="1"/>
</dbReference>
<feature type="chain" id="PRO_0000331842" description="Methionine--tRNA ligase">
    <location>
        <begin position="1"/>
        <end position="600"/>
    </location>
</feature>
<feature type="short sequence motif" description="'HIGH' region">
    <location>
        <begin position="11"/>
        <end position="21"/>
    </location>
</feature>
<feature type="short sequence motif" description="'KMSKS' region">
    <location>
        <begin position="350"/>
        <end position="354"/>
    </location>
</feature>
<feature type="binding site" evidence="1">
    <location>
        <position position="143"/>
    </location>
    <ligand>
        <name>Zn(2+)</name>
        <dbReference type="ChEBI" id="CHEBI:29105"/>
    </ligand>
</feature>
<feature type="binding site" evidence="1">
    <location>
        <position position="146"/>
    </location>
    <ligand>
        <name>Zn(2+)</name>
        <dbReference type="ChEBI" id="CHEBI:29105"/>
    </ligand>
</feature>
<feature type="binding site" evidence="1">
    <location>
        <position position="156"/>
    </location>
    <ligand>
        <name>Zn(2+)</name>
        <dbReference type="ChEBI" id="CHEBI:29105"/>
    </ligand>
</feature>
<feature type="binding site" evidence="1">
    <location>
        <position position="159"/>
    </location>
    <ligand>
        <name>Zn(2+)</name>
        <dbReference type="ChEBI" id="CHEBI:29105"/>
    </ligand>
</feature>
<feature type="binding site" evidence="1">
    <location>
        <position position="353"/>
    </location>
    <ligand>
        <name>ATP</name>
        <dbReference type="ChEBI" id="CHEBI:30616"/>
    </ligand>
</feature>
<protein>
    <recommendedName>
        <fullName evidence="1">Methionine--tRNA ligase</fullName>
        <ecNumber evidence="1">6.1.1.10</ecNumber>
    </recommendedName>
    <alternativeName>
        <fullName evidence="1">Methionyl-tRNA synthetase</fullName>
        <shortName evidence="1">MetRS</shortName>
    </alternativeName>
</protein>
<comment type="function">
    <text evidence="1">Is required not only for elongation of protein synthesis but also for the initiation of all mRNA translation through initiator tRNA(fMet) aminoacylation.</text>
</comment>
<comment type="catalytic activity">
    <reaction evidence="1">
        <text>tRNA(Met) + L-methionine + ATP = L-methionyl-tRNA(Met) + AMP + diphosphate</text>
        <dbReference type="Rhea" id="RHEA:13481"/>
        <dbReference type="Rhea" id="RHEA-COMP:9667"/>
        <dbReference type="Rhea" id="RHEA-COMP:9698"/>
        <dbReference type="ChEBI" id="CHEBI:30616"/>
        <dbReference type="ChEBI" id="CHEBI:33019"/>
        <dbReference type="ChEBI" id="CHEBI:57844"/>
        <dbReference type="ChEBI" id="CHEBI:78442"/>
        <dbReference type="ChEBI" id="CHEBI:78530"/>
        <dbReference type="ChEBI" id="CHEBI:456215"/>
        <dbReference type="EC" id="6.1.1.10"/>
    </reaction>
</comment>
<comment type="cofactor">
    <cofactor evidence="1">
        <name>Zn(2+)</name>
        <dbReference type="ChEBI" id="CHEBI:29105"/>
    </cofactor>
    <text evidence="1">Binds 1 zinc ion per subunit.</text>
</comment>
<comment type="subunit">
    <text evidence="1">Monomer.</text>
</comment>
<comment type="subcellular location">
    <subcellularLocation>
        <location evidence="1">Cytoplasm</location>
    </subcellularLocation>
</comment>
<comment type="similarity">
    <text evidence="1">Belongs to the class-I aminoacyl-tRNA synthetase family. MetG type 1 subfamily.</text>
</comment>
<gene>
    <name evidence="1" type="primary">metG</name>
    <name type="ordered locus">Krad_1042</name>
</gene>